<organism>
    <name type="scientific">Meyerozyma guilliermondii (strain ATCC 6260 / CBS 566 / DSM 6381 / JCM 1539 / NBRC 10279 / NRRL Y-324)</name>
    <name type="common">Yeast</name>
    <name type="synonym">Candida guilliermondii</name>
    <dbReference type="NCBI Taxonomy" id="294746"/>
    <lineage>
        <taxon>Eukaryota</taxon>
        <taxon>Fungi</taxon>
        <taxon>Dikarya</taxon>
        <taxon>Ascomycota</taxon>
        <taxon>Saccharomycotina</taxon>
        <taxon>Pichiomycetes</taxon>
        <taxon>Debaryomycetaceae</taxon>
        <taxon>Meyerozyma</taxon>
    </lineage>
</organism>
<proteinExistence type="inferred from homology"/>
<protein>
    <recommendedName>
        <fullName>ATP-dependent RNA helicase DBP3</fullName>
        <ecNumber>3.6.4.13</ecNumber>
    </recommendedName>
</protein>
<keyword id="KW-0067">ATP-binding</keyword>
<keyword id="KW-0347">Helicase</keyword>
<keyword id="KW-0378">Hydrolase</keyword>
<keyword id="KW-0547">Nucleotide-binding</keyword>
<keyword id="KW-0539">Nucleus</keyword>
<keyword id="KW-1185">Reference proteome</keyword>
<keyword id="KW-0690">Ribosome biogenesis</keyword>
<keyword id="KW-0694">RNA-binding</keyword>
<keyword id="KW-0698">rRNA processing</keyword>
<feature type="chain" id="PRO_0000294618" description="ATP-dependent RNA helicase DBP3">
    <location>
        <begin position="1"/>
        <end position="534"/>
    </location>
</feature>
<feature type="domain" description="Helicase ATP-binding" evidence="2">
    <location>
        <begin position="160"/>
        <end position="330"/>
    </location>
</feature>
<feature type="domain" description="Helicase C-terminal" evidence="3">
    <location>
        <begin position="359"/>
        <end position="504"/>
    </location>
</feature>
<feature type="region of interest" description="Disordered" evidence="4">
    <location>
        <begin position="1"/>
        <end position="96"/>
    </location>
</feature>
<feature type="short sequence motif" description="Q motif">
    <location>
        <begin position="131"/>
        <end position="157"/>
    </location>
</feature>
<feature type="short sequence motif" description="DEAD box">
    <location>
        <begin position="278"/>
        <end position="281"/>
    </location>
</feature>
<feature type="compositionally biased region" description="Basic and acidic residues" evidence="4">
    <location>
        <begin position="8"/>
        <end position="30"/>
    </location>
</feature>
<feature type="compositionally biased region" description="Basic residues" evidence="4">
    <location>
        <begin position="31"/>
        <end position="53"/>
    </location>
</feature>
<feature type="compositionally biased region" description="Basic and acidic residues" evidence="4">
    <location>
        <begin position="54"/>
        <end position="63"/>
    </location>
</feature>
<feature type="compositionally biased region" description="Low complexity" evidence="4">
    <location>
        <begin position="82"/>
        <end position="92"/>
    </location>
</feature>
<feature type="binding site" evidence="2">
    <location>
        <begin position="173"/>
        <end position="180"/>
    </location>
    <ligand>
        <name>ATP</name>
        <dbReference type="ChEBI" id="CHEBI:30616"/>
    </ligand>
</feature>
<name>DBP3_PICGU</name>
<reference key="1">
    <citation type="journal article" date="2009" name="Nature">
        <title>Evolution of pathogenicity and sexual reproduction in eight Candida genomes.</title>
        <authorList>
            <person name="Butler G."/>
            <person name="Rasmussen M.D."/>
            <person name="Lin M.F."/>
            <person name="Santos M.A.S."/>
            <person name="Sakthikumar S."/>
            <person name="Munro C.A."/>
            <person name="Rheinbay E."/>
            <person name="Grabherr M."/>
            <person name="Forche A."/>
            <person name="Reedy J.L."/>
            <person name="Agrafioti I."/>
            <person name="Arnaud M.B."/>
            <person name="Bates S."/>
            <person name="Brown A.J.P."/>
            <person name="Brunke S."/>
            <person name="Costanzo M.C."/>
            <person name="Fitzpatrick D.A."/>
            <person name="de Groot P.W.J."/>
            <person name="Harris D."/>
            <person name="Hoyer L.L."/>
            <person name="Hube B."/>
            <person name="Klis F.M."/>
            <person name="Kodira C."/>
            <person name="Lennard N."/>
            <person name="Logue M.E."/>
            <person name="Martin R."/>
            <person name="Neiman A.M."/>
            <person name="Nikolaou E."/>
            <person name="Quail M.A."/>
            <person name="Quinn J."/>
            <person name="Santos M.C."/>
            <person name="Schmitzberger F.F."/>
            <person name="Sherlock G."/>
            <person name="Shah P."/>
            <person name="Silverstein K.A.T."/>
            <person name="Skrzypek M.S."/>
            <person name="Soll D."/>
            <person name="Staggs R."/>
            <person name="Stansfield I."/>
            <person name="Stumpf M.P.H."/>
            <person name="Sudbery P.E."/>
            <person name="Srikantha T."/>
            <person name="Zeng Q."/>
            <person name="Berman J."/>
            <person name="Berriman M."/>
            <person name="Heitman J."/>
            <person name="Gow N.A.R."/>
            <person name="Lorenz M.C."/>
            <person name="Birren B.W."/>
            <person name="Kellis M."/>
            <person name="Cuomo C.A."/>
        </authorList>
    </citation>
    <scope>NUCLEOTIDE SEQUENCE [LARGE SCALE GENOMIC DNA]</scope>
    <source>
        <strain>ATCC 6260 / CBS 566 / DSM 6381 / JCM 1539 / NBRC 10279 / NRRL Y-324</strain>
    </source>
</reference>
<gene>
    <name type="primary">DBP3</name>
    <name type="ORF">PGUG_00233</name>
</gene>
<comment type="function">
    <text evidence="1">ATP-dependent RNA helicase required for 60S ribosomal subunit synthesis. Involved in efficient pre-rRNA processing, predominantly at site A3, which is necessary for the normal formation of 25S and 5.8S rRNAs (By similarity).</text>
</comment>
<comment type="catalytic activity">
    <reaction>
        <text>ATP + H2O = ADP + phosphate + H(+)</text>
        <dbReference type="Rhea" id="RHEA:13065"/>
        <dbReference type="ChEBI" id="CHEBI:15377"/>
        <dbReference type="ChEBI" id="CHEBI:15378"/>
        <dbReference type="ChEBI" id="CHEBI:30616"/>
        <dbReference type="ChEBI" id="CHEBI:43474"/>
        <dbReference type="ChEBI" id="CHEBI:456216"/>
        <dbReference type="EC" id="3.6.4.13"/>
    </reaction>
</comment>
<comment type="subcellular location">
    <subcellularLocation>
        <location evidence="1">Nucleus</location>
        <location evidence="1">Nucleolus</location>
    </subcellularLocation>
</comment>
<comment type="domain">
    <text>The Q motif is unique to and characteristic of the DEAD box family of RNA helicases and controls ATP binding and hydrolysis.</text>
</comment>
<comment type="similarity">
    <text evidence="5">Belongs to the DEAD box helicase family. DDX5/DBP2 subfamily.</text>
</comment>
<sequence length="534" mass="59650">MGSKRKHESGDVEVKKPKHDNEVKGKEKKEKKEKKEKKEKKEKKEKKEKKEKKEKKEKNEKKEKKEKKAKKEKTEETEETDSTVSTVSSSSSGYTQAAELTALPQSEIDEFLQTNEVTVEDPHKLGFRPILSFDHVQLQSKIAPIVTKFPKPTPIQSASWPYLLNGDDVVGVAETGSGKTFAFGVPAINNIITDNKKGLRVLCISPTRELALQIYDNLTMLTKNCGLTCVAIYGGVPKDQQIKAVKTASVVVATPGRLVDLLNDGAVDLSTIDYLVLDEADRMLEKGFEEDIKNIIGCTNKQRQTLMFTATWPKEVRELAATFMNKAVKVSIGNRDELAANKRITQTVEVMDPRDKERRLLQLLRQYGSDQKILVFALYKKEATRVEAMLRRSGFNVAAIHGDLSQQQRTSALDSFKRGDSNLLLATDVAARGLDIPNVKVVINLTFPLTVEDYVHRIGRTGRAGQTGIAHTLFTEHEKHLSGALMNVLRGAGQPVPDELLKFGGHTKKKSHSAYGAFFKDVDMTKTAKKIKFE</sequence>
<dbReference type="EC" id="3.6.4.13"/>
<dbReference type="EMBL" id="CH408155">
    <property type="protein sequence ID" value="EDK36135.2"/>
    <property type="molecule type" value="Genomic_DNA"/>
</dbReference>
<dbReference type="RefSeq" id="XP_001486856.1">
    <property type="nucleotide sequence ID" value="XM_001486806.1"/>
</dbReference>
<dbReference type="SMR" id="A5DAC8"/>
<dbReference type="FunCoup" id="A5DAC8">
    <property type="interactions" value="407"/>
</dbReference>
<dbReference type="STRING" id="294746.A5DAC8"/>
<dbReference type="GeneID" id="5129457"/>
<dbReference type="KEGG" id="pgu:PGUG_00233"/>
<dbReference type="VEuPathDB" id="FungiDB:PGUG_00233"/>
<dbReference type="eggNOG" id="KOG0331">
    <property type="taxonomic scope" value="Eukaryota"/>
</dbReference>
<dbReference type="HOGENOM" id="CLU_003041_1_5_1"/>
<dbReference type="InParanoid" id="A5DAC8"/>
<dbReference type="OMA" id="KKTHDMY"/>
<dbReference type="OrthoDB" id="196131at2759"/>
<dbReference type="Proteomes" id="UP000001997">
    <property type="component" value="Unassembled WGS sequence"/>
</dbReference>
<dbReference type="GO" id="GO:0005730">
    <property type="term" value="C:nucleolus"/>
    <property type="evidence" value="ECO:0007669"/>
    <property type="project" value="UniProtKB-SubCell"/>
</dbReference>
<dbReference type="GO" id="GO:0030687">
    <property type="term" value="C:preribosome, large subunit precursor"/>
    <property type="evidence" value="ECO:0007669"/>
    <property type="project" value="EnsemblFungi"/>
</dbReference>
<dbReference type="GO" id="GO:0005524">
    <property type="term" value="F:ATP binding"/>
    <property type="evidence" value="ECO:0007669"/>
    <property type="project" value="UniProtKB-KW"/>
</dbReference>
<dbReference type="GO" id="GO:0016887">
    <property type="term" value="F:ATP hydrolysis activity"/>
    <property type="evidence" value="ECO:0007669"/>
    <property type="project" value="RHEA"/>
</dbReference>
<dbReference type="GO" id="GO:0003723">
    <property type="term" value="F:RNA binding"/>
    <property type="evidence" value="ECO:0007669"/>
    <property type="project" value="UniProtKB-KW"/>
</dbReference>
<dbReference type="GO" id="GO:0003724">
    <property type="term" value="F:RNA helicase activity"/>
    <property type="evidence" value="ECO:0007669"/>
    <property type="project" value="UniProtKB-EC"/>
</dbReference>
<dbReference type="GO" id="GO:0000464">
    <property type="term" value="P:endonucleolytic cleavage in ITS1 upstream of 5.8S rRNA from tricistronic rRNA transcript (SSU-rRNA, 5.8S rRNA, LSU-rRNA)"/>
    <property type="evidence" value="ECO:0007669"/>
    <property type="project" value="EnsemblFungi"/>
</dbReference>
<dbReference type="CDD" id="cd00268">
    <property type="entry name" value="DEADc"/>
    <property type="match status" value="1"/>
</dbReference>
<dbReference type="CDD" id="cd18787">
    <property type="entry name" value="SF2_C_DEAD"/>
    <property type="match status" value="1"/>
</dbReference>
<dbReference type="FunFam" id="3.40.50.300:FF:000008">
    <property type="entry name" value="ATP-dependent RNA helicase RhlB"/>
    <property type="match status" value="1"/>
</dbReference>
<dbReference type="Gene3D" id="3.40.50.300">
    <property type="entry name" value="P-loop containing nucleotide triphosphate hydrolases"/>
    <property type="match status" value="2"/>
</dbReference>
<dbReference type="InterPro" id="IPR011545">
    <property type="entry name" value="DEAD/DEAH_box_helicase_dom"/>
</dbReference>
<dbReference type="InterPro" id="IPR014001">
    <property type="entry name" value="Helicase_ATP-bd"/>
</dbReference>
<dbReference type="InterPro" id="IPR001650">
    <property type="entry name" value="Helicase_C-like"/>
</dbReference>
<dbReference type="InterPro" id="IPR027417">
    <property type="entry name" value="P-loop_NTPase"/>
</dbReference>
<dbReference type="InterPro" id="IPR000629">
    <property type="entry name" value="RNA-helicase_DEAD-box_CS"/>
</dbReference>
<dbReference type="PANTHER" id="PTHR47958">
    <property type="entry name" value="ATP-DEPENDENT RNA HELICASE DBP3"/>
    <property type="match status" value="1"/>
</dbReference>
<dbReference type="Pfam" id="PF00270">
    <property type="entry name" value="DEAD"/>
    <property type="match status" value="1"/>
</dbReference>
<dbReference type="Pfam" id="PF00271">
    <property type="entry name" value="Helicase_C"/>
    <property type="match status" value="1"/>
</dbReference>
<dbReference type="SMART" id="SM00487">
    <property type="entry name" value="DEXDc"/>
    <property type="match status" value="1"/>
</dbReference>
<dbReference type="SMART" id="SM00490">
    <property type="entry name" value="HELICc"/>
    <property type="match status" value="1"/>
</dbReference>
<dbReference type="SUPFAM" id="SSF52540">
    <property type="entry name" value="P-loop containing nucleoside triphosphate hydrolases"/>
    <property type="match status" value="1"/>
</dbReference>
<dbReference type="PROSITE" id="PS00039">
    <property type="entry name" value="DEAD_ATP_HELICASE"/>
    <property type="match status" value="1"/>
</dbReference>
<dbReference type="PROSITE" id="PS51192">
    <property type="entry name" value="HELICASE_ATP_BIND_1"/>
    <property type="match status" value="1"/>
</dbReference>
<dbReference type="PROSITE" id="PS51194">
    <property type="entry name" value="HELICASE_CTER"/>
    <property type="match status" value="1"/>
</dbReference>
<dbReference type="PROSITE" id="PS51195">
    <property type="entry name" value="Q_MOTIF"/>
    <property type="match status" value="1"/>
</dbReference>
<accession>A5DAC8</accession>
<evidence type="ECO:0000250" key="1"/>
<evidence type="ECO:0000255" key="2">
    <source>
        <dbReference type="PROSITE-ProRule" id="PRU00541"/>
    </source>
</evidence>
<evidence type="ECO:0000255" key="3">
    <source>
        <dbReference type="PROSITE-ProRule" id="PRU00542"/>
    </source>
</evidence>
<evidence type="ECO:0000256" key="4">
    <source>
        <dbReference type="SAM" id="MobiDB-lite"/>
    </source>
</evidence>
<evidence type="ECO:0000305" key="5"/>